<dbReference type="EC" id="3.2.1.4"/>
<dbReference type="EMBL" id="AL035679">
    <property type="protein sequence ID" value="CAB38819.1"/>
    <property type="molecule type" value="Genomic_DNA"/>
</dbReference>
<dbReference type="EMBL" id="AL161594">
    <property type="protein sequence ID" value="CAB80562.1"/>
    <property type="molecule type" value="Genomic_DNA"/>
</dbReference>
<dbReference type="EMBL" id="CP002687">
    <property type="protein sequence ID" value="AEE87005.1"/>
    <property type="status" value="ALT_SEQ"/>
    <property type="molecule type" value="Genomic_DNA"/>
</dbReference>
<dbReference type="EMBL" id="CP002687">
    <property type="protein sequence ID" value="ANM67304.1"/>
    <property type="molecule type" value="Genomic_DNA"/>
</dbReference>
<dbReference type="PIR" id="T06059">
    <property type="entry name" value="T06059"/>
</dbReference>
<dbReference type="RefSeq" id="NP_001329141.1">
    <property type="nucleotide sequence ID" value="NM_001342521.1"/>
</dbReference>
<dbReference type="RefSeq" id="NP_195610.3">
    <property type="nucleotide sequence ID" value="NM_120059.3"/>
</dbReference>
<dbReference type="SMR" id="Q9SVJ4"/>
<dbReference type="FunCoup" id="Q9SVJ4">
    <property type="interactions" value="170"/>
</dbReference>
<dbReference type="STRING" id="3702.Q9SVJ4"/>
<dbReference type="CAZy" id="GH9">
    <property type="family name" value="Glycoside Hydrolase Family 9"/>
</dbReference>
<dbReference type="GlyCosmos" id="Q9SVJ4">
    <property type="glycosylation" value="1 site, No reported glycans"/>
</dbReference>
<dbReference type="GlyGen" id="Q9SVJ4">
    <property type="glycosylation" value="2 sites"/>
</dbReference>
<dbReference type="iPTMnet" id="Q9SVJ4"/>
<dbReference type="PaxDb" id="3702-AT4G38990.1"/>
<dbReference type="ProteomicsDB" id="230115"/>
<dbReference type="EnsemblPlants" id="AT4G38990.2">
    <property type="protein sequence ID" value="AT4G38990.2"/>
    <property type="gene ID" value="AT4G38990"/>
</dbReference>
<dbReference type="GeneID" id="830054"/>
<dbReference type="Gramene" id="AT4G38990.2">
    <property type="protein sequence ID" value="AT4G38990.2"/>
    <property type="gene ID" value="AT4G38990"/>
</dbReference>
<dbReference type="KEGG" id="ath:AT4G38990"/>
<dbReference type="Araport" id="AT4G38990"/>
<dbReference type="TAIR" id="AT4G38990">
    <property type="gene designation" value="GH9B16"/>
</dbReference>
<dbReference type="eggNOG" id="ENOG502QV58">
    <property type="taxonomic scope" value="Eukaryota"/>
</dbReference>
<dbReference type="InParanoid" id="Q9SVJ4"/>
<dbReference type="OMA" id="CSVNGYE"/>
<dbReference type="PRO" id="PR:Q9SVJ4"/>
<dbReference type="Proteomes" id="UP000006548">
    <property type="component" value="Chromosome 4"/>
</dbReference>
<dbReference type="ExpressionAtlas" id="Q9SVJ4">
    <property type="expression patterns" value="baseline and differential"/>
</dbReference>
<dbReference type="GO" id="GO:0005576">
    <property type="term" value="C:extracellular region"/>
    <property type="evidence" value="ECO:0007669"/>
    <property type="project" value="UniProtKB-SubCell"/>
</dbReference>
<dbReference type="GO" id="GO:0008810">
    <property type="term" value="F:cellulase activity"/>
    <property type="evidence" value="ECO:0007669"/>
    <property type="project" value="UniProtKB-EC"/>
</dbReference>
<dbReference type="GO" id="GO:0071555">
    <property type="term" value="P:cell wall organization"/>
    <property type="evidence" value="ECO:0007669"/>
    <property type="project" value="UniProtKB-KW"/>
</dbReference>
<dbReference type="GO" id="GO:0030245">
    <property type="term" value="P:cellulose catabolic process"/>
    <property type="evidence" value="ECO:0007669"/>
    <property type="project" value="UniProtKB-KW"/>
</dbReference>
<dbReference type="FunFam" id="1.50.10.10:FF:000020">
    <property type="entry name" value="Endoglucanase"/>
    <property type="match status" value="1"/>
</dbReference>
<dbReference type="Gene3D" id="1.50.10.10">
    <property type="match status" value="1"/>
</dbReference>
<dbReference type="InterPro" id="IPR008928">
    <property type="entry name" value="6-hairpin_glycosidase_sf"/>
</dbReference>
<dbReference type="InterPro" id="IPR012341">
    <property type="entry name" value="6hp_glycosidase-like_sf"/>
</dbReference>
<dbReference type="InterPro" id="IPR001701">
    <property type="entry name" value="Glyco_hydro_9"/>
</dbReference>
<dbReference type="InterPro" id="IPR018221">
    <property type="entry name" value="Glyco_hydro_9_His_AS"/>
</dbReference>
<dbReference type="PANTHER" id="PTHR22298">
    <property type="entry name" value="ENDO-1,4-BETA-GLUCANASE"/>
    <property type="match status" value="1"/>
</dbReference>
<dbReference type="Pfam" id="PF00759">
    <property type="entry name" value="Glyco_hydro_9"/>
    <property type="match status" value="1"/>
</dbReference>
<dbReference type="SUPFAM" id="SSF48208">
    <property type="entry name" value="Six-hairpin glycosidases"/>
    <property type="match status" value="1"/>
</dbReference>
<dbReference type="PROSITE" id="PS60032">
    <property type="entry name" value="GH9_1"/>
    <property type="match status" value="1"/>
</dbReference>
<dbReference type="PROSITE" id="PS00592">
    <property type="entry name" value="GH9_2"/>
    <property type="match status" value="1"/>
</dbReference>
<keyword id="KW-0119">Carbohydrate metabolism</keyword>
<keyword id="KW-0961">Cell wall biogenesis/degradation</keyword>
<keyword id="KW-0136">Cellulose degradation</keyword>
<keyword id="KW-0325">Glycoprotein</keyword>
<keyword id="KW-0326">Glycosidase</keyword>
<keyword id="KW-0378">Hydrolase</keyword>
<keyword id="KW-0624">Polysaccharide degradation</keyword>
<keyword id="KW-1185">Reference proteome</keyword>
<keyword id="KW-0964">Secreted</keyword>
<keyword id="KW-0732">Signal</keyword>
<protein>
    <recommendedName>
        <fullName>Endoglucanase 22</fullName>
        <ecNumber>3.2.1.4</ecNumber>
    </recommendedName>
    <alternativeName>
        <fullName>Endo-1,4-beta glucanase 22</fullName>
    </alternativeName>
    <alternativeName>
        <fullName>Glycosyl hydrolase 9B16</fullName>
    </alternativeName>
</protein>
<reference key="1">
    <citation type="journal article" date="1999" name="Nature">
        <title>Sequence and analysis of chromosome 4 of the plant Arabidopsis thaliana.</title>
        <authorList>
            <person name="Mayer K.F.X."/>
            <person name="Schueller C."/>
            <person name="Wambutt R."/>
            <person name="Murphy G."/>
            <person name="Volckaert G."/>
            <person name="Pohl T."/>
            <person name="Duesterhoeft A."/>
            <person name="Stiekema W."/>
            <person name="Entian K.-D."/>
            <person name="Terryn N."/>
            <person name="Harris B."/>
            <person name="Ansorge W."/>
            <person name="Brandt P."/>
            <person name="Grivell L.A."/>
            <person name="Rieger M."/>
            <person name="Weichselgartner M."/>
            <person name="de Simone V."/>
            <person name="Obermaier B."/>
            <person name="Mache R."/>
            <person name="Mueller M."/>
            <person name="Kreis M."/>
            <person name="Delseny M."/>
            <person name="Puigdomenech P."/>
            <person name="Watson M."/>
            <person name="Schmidtheini T."/>
            <person name="Reichert B."/>
            <person name="Portetelle D."/>
            <person name="Perez-Alonso M."/>
            <person name="Boutry M."/>
            <person name="Bancroft I."/>
            <person name="Vos P."/>
            <person name="Hoheisel J."/>
            <person name="Zimmermann W."/>
            <person name="Wedler H."/>
            <person name="Ridley P."/>
            <person name="Langham S.-A."/>
            <person name="McCullagh B."/>
            <person name="Bilham L."/>
            <person name="Robben J."/>
            <person name="van der Schueren J."/>
            <person name="Grymonprez B."/>
            <person name="Chuang Y.-J."/>
            <person name="Vandenbussche F."/>
            <person name="Braeken M."/>
            <person name="Weltjens I."/>
            <person name="Voet M."/>
            <person name="Bastiaens I."/>
            <person name="Aert R."/>
            <person name="Defoor E."/>
            <person name="Weitzenegger T."/>
            <person name="Bothe G."/>
            <person name="Ramsperger U."/>
            <person name="Hilbert H."/>
            <person name="Braun M."/>
            <person name="Holzer E."/>
            <person name="Brandt A."/>
            <person name="Peters S."/>
            <person name="van Staveren M."/>
            <person name="Dirkse W."/>
            <person name="Mooijman P."/>
            <person name="Klein Lankhorst R."/>
            <person name="Rose M."/>
            <person name="Hauf J."/>
            <person name="Koetter P."/>
            <person name="Berneiser S."/>
            <person name="Hempel S."/>
            <person name="Feldpausch M."/>
            <person name="Lamberth S."/>
            <person name="Van den Daele H."/>
            <person name="De Keyser A."/>
            <person name="Buysshaert C."/>
            <person name="Gielen J."/>
            <person name="Villarroel R."/>
            <person name="De Clercq R."/>
            <person name="van Montagu M."/>
            <person name="Rogers J."/>
            <person name="Cronin A."/>
            <person name="Quail M.A."/>
            <person name="Bray-Allen S."/>
            <person name="Clark L."/>
            <person name="Doggett J."/>
            <person name="Hall S."/>
            <person name="Kay M."/>
            <person name="Lennard N."/>
            <person name="McLay K."/>
            <person name="Mayes R."/>
            <person name="Pettett A."/>
            <person name="Rajandream M.A."/>
            <person name="Lyne M."/>
            <person name="Benes V."/>
            <person name="Rechmann S."/>
            <person name="Borkova D."/>
            <person name="Bloecker H."/>
            <person name="Scharfe M."/>
            <person name="Grimm M."/>
            <person name="Loehnert T.-H."/>
            <person name="Dose S."/>
            <person name="de Haan M."/>
            <person name="Maarse A.C."/>
            <person name="Schaefer M."/>
            <person name="Mueller-Auer S."/>
            <person name="Gabel C."/>
            <person name="Fuchs M."/>
            <person name="Fartmann B."/>
            <person name="Granderath K."/>
            <person name="Dauner D."/>
            <person name="Herzl A."/>
            <person name="Neumann S."/>
            <person name="Argiriou A."/>
            <person name="Vitale D."/>
            <person name="Liguori R."/>
            <person name="Piravandi E."/>
            <person name="Massenet O."/>
            <person name="Quigley F."/>
            <person name="Clabauld G."/>
            <person name="Muendlein A."/>
            <person name="Felber R."/>
            <person name="Schnabl S."/>
            <person name="Hiller R."/>
            <person name="Schmidt W."/>
            <person name="Lecharny A."/>
            <person name="Aubourg S."/>
            <person name="Chefdor F."/>
            <person name="Cooke R."/>
            <person name="Berger C."/>
            <person name="Monfort A."/>
            <person name="Casacuberta E."/>
            <person name="Gibbons T."/>
            <person name="Weber N."/>
            <person name="Vandenbol M."/>
            <person name="Bargues M."/>
            <person name="Terol J."/>
            <person name="Torres A."/>
            <person name="Perez-Perez A."/>
            <person name="Purnelle B."/>
            <person name="Bent E."/>
            <person name="Johnson S."/>
            <person name="Tacon D."/>
            <person name="Jesse T."/>
            <person name="Heijnen L."/>
            <person name="Schwarz S."/>
            <person name="Scholler P."/>
            <person name="Heber S."/>
            <person name="Francs P."/>
            <person name="Bielke C."/>
            <person name="Frishman D."/>
            <person name="Haase D."/>
            <person name="Lemcke K."/>
            <person name="Mewes H.-W."/>
            <person name="Stocker S."/>
            <person name="Zaccaria P."/>
            <person name="Bevan M."/>
            <person name="Wilson R.K."/>
            <person name="de la Bastide M."/>
            <person name="Habermann K."/>
            <person name="Parnell L."/>
            <person name="Dedhia N."/>
            <person name="Gnoj L."/>
            <person name="Schutz K."/>
            <person name="Huang E."/>
            <person name="Spiegel L."/>
            <person name="Sekhon M."/>
            <person name="Murray J."/>
            <person name="Sheet P."/>
            <person name="Cordes M."/>
            <person name="Abu-Threideh J."/>
            <person name="Stoneking T."/>
            <person name="Kalicki J."/>
            <person name="Graves T."/>
            <person name="Harmon G."/>
            <person name="Edwards J."/>
            <person name="Latreille P."/>
            <person name="Courtney L."/>
            <person name="Cloud J."/>
            <person name="Abbott A."/>
            <person name="Scott K."/>
            <person name="Johnson D."/>
            <person name="Minx P."/>
            <person name="Bentley D."/>
            <person name="Fulton B."/>
            <person name="Miller N."/>
            <person name="Greco T."/>
            <person name="Kemp K."/>
            <person name="Kramer J."/>
            <person name="Fulton L."/>
            <person name="Mardis E."/>
            <person name="Dante M."/>
            <person name="Pepin K."/>
            <person name="Hillier L.W."/>
            <person name="Nelson J."/>
            <person name="Spieth J."/>
            <person name="Ryan E."/>
            <person name="Andrews S."/>
            <person name="Geisel C."/>
            <person name="Layman D."/>
            <person name="Du H."/>
            <person name="Ali J."/>
            <person name="Berghoff A."/>
            <person name="Jones K."/>
            <person name="Drone K."/>
            <person name="Cotton M."/>
            <person name="Joshu C."/>
            <person name="Antonoiu B."/>
            <person name="Zidanic M."/>
            <person name="Strong C."/>
            <person name="Sun H."/>
            <person name="Lamar B."/>
            <person name="Yordan C."/>
            <person name="Ma P."/>
            <person name="Zhong J."/>
            <person name="Preston R."/>
            <person name="Vil D."/>
            <person name="Shekher M."/>
            <person name="Matero A."/>
            <person name="Shah R."/>
            <person name="Swaby I.K."/>
            <person name="O'Shaughnessy A."/>
            <person name="Rodriguez M."/>
            <person name="Hoffman J."/>
            <person name="Till S."/>
            <person name="Granat S."/>
            <person name="Shohdy N."/>
            <person name="Hasegawa A."/>
            <person name="Hameed A."/>
            <person name="Lodhi M."/>
            <person name="Johnson A."/>
            <person name="Chen E."/>
            <person name="Marra M.A."/>
            <person name="Martienssen R."/>
            <person name="McCombie W.R."/>
        </authorList>
    </citation>
    <scope>NUCLEOTIDE SEQUENCE [LARGE SCALE GENOMIC DNA]</scope>
    <source>
        <strain>cv. Columbia</strain>
    </source>
</reference>
<reference key="2">
    <citation type="journal article" date="2017" name="Plant J.">
        <title>Araport11: a complete reannotation of the Arabidopsis thaliana reference genome.</title>
        <authorList>
            <person name="Cheng C.Y."/>
            <person name="Krishnakumar V."/>
            <person name="Chan A.P."/>
            <person name="Thibaud-Nissen F."/>
            <person name="Schobel S."/>
            <person name="Town C.D."/>
        </authorList>
    </citation>
    <scope>GENOME REANNOTATION</scope>
    <source>
        <strain>cv. Columbia</strain>
    </source>
</reference>
<reference key="3">
    <citation type="journal article" date="2004" name="J. Mol. Evol.">
        <title>Phylogenetic analysis of the plant endo-beta-1,4-glucanase gene family.</title>
        <authorList>
            <person name="Libertini E."/>
            <person name="Li Y."/>
            <person name="McQueen-Mason S.J."/>
        </authorList>
    </citation>
    <scope>GENE FAMILY</scope>
</reference>
<accession>Q9SVJ4</accession>
<accession>F4JUJ7</accession>
<evidence type="ECO:0000250" key="1"/>
<evidence type="ECO:0000255" key="2"/>
<evidence type="ECO:0000255" key="3">
    <source>
        <dbReference type="PROSITE-ProRule" id="PRU10059"/>
    </source>
</evidence>
<evidence type="ECO:0000255" key="4">
    <source>
        <dbReference type="PROSITE-ProRule" id="PRU10140"/>
    </source>
</evidence>
<evidence type="ECO:0000305" key="5"/>
<comment type="catalytic activity">
    <reaction>
        <text>Endohydrolysis of (1-&gt;4)-beta-D-glucosidic linkages in cellulose, lichenin and cereal beta-D-glucans.</text>
        <dbReference type="EC" id="3.2.1.4"/>
    </reaction>
</comment>
<comment type="subcellular location">
    <subcellularLocation>
        <location evidence="1">Secreted</location>
    </subcellularLocation>
</comment>
<comment type="similarity">
    <text evidence="4 5">Belongs to the glycosyl hydrolase 9 (cellulase E) family.</text>
</comment>
<comment type="caution">
    <text evidence="5">The conserved 'Asp-464' active site is replaced by a Gly residue.</text>
</comment>
<comment type="sequence caution" evidence="5">
    <conflict type="erroneous gene model prediction">
        <sequence resource="EMBL-CDS" id="AEE87005"/>
    </conflict>
</comment>
<proteinExistence type="inferred from homology"/>
<sequence>MKPLVCSFIVILLILLPTTISHDYSDALTKSILFFEGQRSGYLPREQRMTWRHNSALNDGKNLNVDLVGGYYDAGDNIKFHFPMAFTTTMLAWSAIDFGSYMSPADLRDNLVALRWGSNYLLKTVSQLPNRIFVQVGEPTPDHQCWERPEDMDTPRTAYALEAPKPASDLAGEIAAALAAASIAFKRFDPRYSKLLLDNALRTFEYADSHRGSYTNNPETKLAVCPFYCSVNGYEDELLWGAAWLRRATGKDSYIKYLVENRQSFGSDSNYFEFGWDNKVGGVNVLVAKEVFEKNVAAIAPYKDTAEKLMCSFFLETPGAHMSYSPGGLLYKPGSSQLQNTVALSFLLLTYANYLSKSSQQPLQILSTTPLWYLTQRIANIVGFEKVDYILGDNPMKMSYMIGYGNRYPRQIHHRGASSPSITTHPTPVKCSEGWNSFSSPNPDPNVLVGAVIGGPNIDDKFVGGRTNASETEPTTYINAPFVGLLAYFKANPV</sequence>
<name>GUN22_ARATH</name>
<gene>
    <name type="primary">GH9B16</name>
    <name type="ordered locus">At4g38990</name>
    <name type="ORF">F19H22.90</name>
</gene>
<feature type="signal peptide" evidence="2">
    <location>
        <begin position="1"/>
        <end position="21"/>
    </location>
</feature>
<feature type="chain" id="PRO_0000249274" description="Endoglucanase 22">
    <location>
        <begin position="22"/>
        <end position="494"/>
    </location>
</feature>
<feature type="active site" description="Nucleophile" evidence="4">
    <location>
        <position position="76"/>
    </location>
</feature>
<feature type="active site" evidence="3">
    <location>
        <position position="413"/>
    </location>
</feature>
<feature type="active site" evidence="1">
    <location>
        <position position="473"/>
    </location>
</feature>
<feature type="glycosylation site" description="N-linked (GlcNAc...) asparagine" evidence="2">
    <location>
        <position position="468"/>
    </location>
</feature>
<organism>
    <name type="scientific">Arabidopsis thaliana</name>
    <name type="common">Mouse-ear cress</name>
    <dbReference type="NCBI Taxonomy" id="3702"/>
    <lineage>
        <taxon>Eukaryota</taxon>
        <taxon>Viridiplantae</taxon>
        <taxon>Streptophyta</taxon>
        <taxon>Embryophyta</taxon>
        <taxon>Tracheophyta</taxon>
        <taxon>Spermatophyta</taxon>
        <taxon>Magnoliopsida</taxon>
        <taxon>eudicotyledons</taxon>
        <taxon>Gunneridae</taxon>
        <taxon>Pentapetalae</taxon>
        <taxon>rosids</taxon>
        <taxon>malvids</taxon>
        <taxon>Brassicales</taxon>
        <taxon>Brassicaceae</taxon>
        <taxon>Camelineae</taxon>
        <taxon>Arabidopsis</taxon>
    </lineage>
</organism>